<organism>
    <name type="scientific">Streptomyces coelicolor (strain ATCC BAA-471 / A3(2) / M145)</name>
    <dbReference type="NCBI Taxonomy" id="100226"/>
    <lineage>
        <taxon>Bacteria</taxon>
        <taxon>Bacillati</taxon>
        <taxon>Actinomycetota</taxon>
        <taxon>Actinomycetes</taxon>
        <taxon>Kitasatosporales</taxon>
        <taxon>Streptomycetaceae</taxon>
        <taxon>Streptomyces</taxon>
        <taxon>Streptomyces albidoflavus group</taxon>
    </lineage>
</organism>
<sequence>MGRVTERRKVIRIRDGAVSTRPDTLVAEEPLEIRLNGKPLAITMRTPGDDFALAAGFLVSEGVLAEQRDLQNIVYCAGATVDGSNTYNVVDVKTAPGVRIPDITLERNVYTTSSCGLCGKASLDAVRTTARWPIADTPPVRVTPELLADLPDRLRASQRVFDRTGGLHAAALFTEDGELVDVREDVGRHNAVDKLVGRALQNADLPLSRSVLLVSGRASFELAQKAVMAGIPVLAAVSAPSSLAVDLAAETGLTLVGFLRGSSMNVYAGADRVALRAAVGQG</sequence>
<dbReference type="EMBL" id="AL939128">
    <property type="protein sequence ID" value="CAA22362.1"/>
    <property type="molecule type" value="Genomic_DNA"/>
</dbReference>
<dbReference type="PIR" id="T35000">
    <property type="entry name" value="T35000"/>
</dbReference>
<dbReference type="RefSeq" id="NP_630639.1">
    <property type="nucleotide sequence ID" value="NC_003888.3"/>
</dbReference>
<dbReference type="RefSeq" id="WP_011031006.1">
    <property type="nucleotide sequence ID" value="NZ_VNID01000002.1"/>
</dbReference>
<dbReference type="SMR" id="Q9ZBW0"/>
<dbReference type="FunCoup" id="Q9ZBW0">
    <property type="interactions" value="5"/>
</dbReference>
<dbReference type="STRING" id="100226.gene:17764215"/>
<dbReference type="PaxDb" id="100226-SCO6558"/>
<dbReference type="KEGG" id="sco:SCO6558"/>
<dbReference type="PATRIC" id="fig|100226.15.peg.6662"/>
<dbReference type="eggNOG" id="COG1526">
    <property type="taxonomic scope" value="Bacteria"/>
</dbReference>
<dbReference type="HOGENOM" id="CLU_056887_3_0_11"/>
<dbReference type="InParanoid" id="Q9ZBW0"/>
<dbReference type="OrthoDB" id="3197277at2"/>
<dbReference type="PhylomeDB" id="Q9ZBW0"/>
<dbReference type="Proteomes" id="UP000001973">
    <property type="component" value="Chromosome"/>
</dbReference>
<dbReference type="GO" id="GO:0005737">
    <property type="term" value="C:cytoplasm"/>
    <property type="evidence" value="ECO:0007669"/>
    <property type="project" value="UniProtKB-SubCell"/>
</dbReference>
<dbReference type="GO" id="GO:0097163">
    <property type="term" value="F:sulfur carrier activity"/>
    <property type="evidence" value="ECO:0007669"/>
    <property type="project" value="UniProtKB-UniRule"/>
</dbReference>
<dbReference type="GO" id="GO:0016783">
    <property type="term" value="F:sulfurtransferase activity"/>
    <property type="evidence" value="ECO:0007669"/>
    <property type="project" value="InterPro"/>
</dbReference>
<dbReference type="GO" id="GO:0006777">
    <property type="term" value="P:Mo-molybdopterin cofactor biosynthetic process"/>
    <property type="evidence" value="ECO:0007669"/>
    <property type="project" value="UniProtKB-UniRule"/>
</dbReference>
<dbReference type="Gene3D" id="3.10.20.10">
    <property type="match status" value="1"/>
</dbReference>
<dbReference type="Gene3D" id="3.40.140.10">
    <property type="entry name" value="Cytidine Deaminase, domain 2"/>
    <property type="match status" value="1"/>
</dbReference>
<dbReference type="HAMAP" id="MF_00187">
    <property type="entry name" value="FdhD"/>
    <property type="match status" value="1"/>
</dbReference>
<dbReference type="InterPro" id="IPR016193">
    <property type="entry name" value="Cytidine_deaminase-like"/>
</dbReference>
<dbReference type="InterPro" id="IPR003786">
    <property type="entry name" value="FdhD"/>
</dbReference>
<dbReference type="NCBIfam" id="TIGR00129">
    <property type="entry name" value="fdhD_narQ"/>
    <property type="match status" value="1"/>
</dbReference>
<dbReference type="NCBIfam" id="NF001943">
    <property type="entry name" value="PRK00724.1-2"/>
    <property type="match status" value="1"/>
</dbReference>
<dbReference type="PANTHER" id="PTHR30592">
    <property type="entry name" value="FORMATE DEHYDROGENASE"/>
    <property type="match status" value="1"/>
</dbReference>
<dbReference type="PANTHER" id="PTHR30592:SF1">
    <property type="entry name" value="SULFUR CARRIER PROTEIN FDHD"/>
    <property type="match status" value="1"/>
</dbReference>
<dbReference type="Pfam" id="PF02634">
    <property type="entry name" value="FdhD-NarQ"/>
    <property type="match status" value="1"/>
</dbReference>
<dbReference type="PIRSF" id="PIRSF015626">
    <property type="entry name" value="FdhD"/>
    <property type="match status" value="1"/>
</dbReference>
<dbReference type="SUPFAM" id="SSF53927">
    <property type="entry name" value="Cytidine deaminase-like"/>
    <property type="match status" value="1"/>
</dbReference>
<feature type="chain" id="PRO_0000152929" description="Sulfur carrier protein FdhD">
    <location>
        <begin position="1"/>
        <end position="282"/>
    </location>
</feature>
<feature type="active site" description="Cysteine persulfide intermediate" evidence="1">
    <location>
        <position position="115"/>
    </location>
</feature>
<keyword id="KW-0963">Cytoplasm</keyword>
<keyword id="KW-0501">Molybdenum cofactor biosynthesis</keyword>
<keyword id="KW-1185">Reference proteome</keyword>
<reference key="1">
    <citation type="journal article" date="2002" name="Nature">
        <title>Complete genome sequence of the model actinomycete Streptomyces coelicolor A3(2).</title>
        <authorList>
            <person name="Bentley S.D."/>
            <person name="Chater K.F."/>
            <person name="Cerdeno-Tarraga A.-M."/>
            <person name="Challis G.L."/>
            <person name="Thomson N.R."/>
            <person name="James K.D."/>
            <person name="Harris D.E."/>
            <person name="Quail M.A."/>
            <person name="Kieser H."/>
            <person name="Harper D."/>
            <person name="Bateman A."/>
            <person name="Brown S."/>
            <person name="Chandra G."/>
            <person name="Chen C.W."/>
            <person name="Collins M."/>
            <person name="Cronin A."/>
            <person name="Fraser A."/>
            <person name="Goble A."/>
            <person name="Hidalgo J."/>
            <person name="Hornsby T."/>
            <person name="Howarth S."/>
            <person name="Huang C.-H."/>
            <person name="Kieser T."/>
            <person name="Larke L."/>
            <person name="Murphy L.D."/>
            <person name="Oliver K."/>
            <person name="O'Neil S."/>
            <person name="Rabbinowitsch E."/>
            <person name="Rajandream M.A."/>
            <person name="Rutherford K.M."/>
            <person name="Rutter S."/>
            <person name="Seeger K."/>
            <person name="Saunders D."/>
            <person name="Sharp S."/>
            <person name="Squares R."/>
            <person name="Squares S."/>
            <person name="Taylor K."/>
            <person name="Warren T."/>
            <person name="Wietzorrek A."/>
            <person name="Woodward J.R."/>
            <person name="Barrell B.G."/>
            <person name="Parkhill J."/>
            <person name="Hopwood D.A."/>
        </authorList>
    </citation>
    <scope>NUCLEOTIDE SEQUENCE [LARGE SCALE GENOMIC DNA]</scope>
    <source>
        <strain>ATCC BAA-471 / A3(2) / M145</strain>
    </source>
</reference>
<comment type="function">
    <text evidence="1">Required for formate dehydrogenase (FDH) activity. Acts as a sulfur carrier protein that transfers sulfur from IscS to the molybdenum cofactor prior to its insertion into FDH.</text>
</comment>
<comment type="subcellular location">
    <subcellularLocation>
        <location evidence="1">Cytoplasm</location>
    </subcellularLocation>
</comment>
<comment type="similarity">
    <text evidence="1">Belongs to the FdhD family.</text>
</comment>
<name>FDHD_STRCO</name>
<accession>Q9ZBW0</accession>
<proteinExistence type="inferred from homology"/>
<protein>
    <recommendedName>
        <fullName evidence="1">Sulfur carrier protein FdhD</fullName>
    </recommendedName>
</protein>
<evidence type="ECO:0000255" key="1">
    <source>
        <dbReference type="HAMAP-Rule" id="MF_00187"/>
    </source>
</evidence>
<gene>
    <name evidence="1" type="primary">fdhD</name>
    <name type="ordered locus">SCO6558</name>
    <name type="ORF">SC4B5.08c</name>
</gene>